<keyword id="KW-0002">3D-structure</keyword>
<keyword id="KW-0406">Ion transport</keyword>
<keyword id="KW-0520">NAD</keyword>
<keyword id="KW-0630">Potassium</keyword>
<keyword id="KW-0633">Potassium transport</keyword>
<keyword id="KW-1185">Reference proteome</keyword>
<keyword id="KW-0813">Transport</keyword>
<sequence length="218" mass="23996">MYIIIAGIGRVGYTLAKSLSEKGHDIVLIDIDKDICKKASAEIDALVINGDCTKIKTLEDAGIEDADMYIAVTGKEEVNLMSSLLAKSYGINKTIARISEIEYKDVFERLGVDVVVSPELIAANYIEKLIERPGILDLAIVGRGEAEILEFIIPEKAKVVNKKIKELGRPQDYLIIAIYDGDELKIPSGDTELKSGDRVLVLVKKDAADAIRKMFLEE</sequence>
<dbReference type="EMBL" id="L77117">
    <property type="protein sequence ID" value="AAB99108.1"/>
    <property type="molecule type" value="Genomic_DNA"/>
</dbReference>
<dbReference type="PIR" id="H64437">
    <property type="entry name" value="H64437"/>
</dbReference>
<dbReference type="RefSeq" id="WP_010870617.1">
    <property type="nucleotide sequence ID" value="NC_000909.1"/>
</dbReference>
<dbReference type="PDB" id="1LSS">
    <property type="method" value="X-ray"/>
    <property type="resolution" value="2.30 A"/>
    <property type="chains" value="A/B/C/D=1-136"/>
</dbReference>
<dbReference type="PDBsum" id="1LSS"/>
<dbReference type="SMR" id="Q58505"/>
<dbReference type="FunCoup" id="Q58505">
    <property type="interactions" value="1"/>
</dbReference>
<dbReference type="STRING" id="243232.MJ_1105"/>
<dbReference type="PaxDb" id="243232-MJ_1105"/>
<dbReference type="EnsemblBacteria" id="AAB99108">
    <property type="protein sequence ID" value="AAB99108"/>
    <property type="gene ID" value="MJ_1105"/>
</dbReference>
<dbReference type="GeneID" id="1452002"/>
<dbReference type="KEGG" id="mja:MJ_1105"/>
<dbReference type="eggNOG" id="arCOG01957">
    <property type="taxonomic scope" value="Archaea"/>
</dbReference>
<dbReference type="HOGENOM" id="CLU_046525_2_3_2"/>
<dbReference type="InParanoid" id="Q58505"/>
<dbReference type="OrthoDB" id="24929at2157"/>
<dbReference type="PhylomeDB" id="Q58505"/>
<dbReference type="EvolutionaryTrace" id="Q58505"/>
<dbReference type="Proteomes" id="UP000000805">
    <property type="component" value="Chromosome"/>
</dbReference>
<dbReference type="GO" id="GO:0005886">
    <property type="term" value="C:plasma membrane"/>
    <property type="evidence" value="ECO:0007669"/>
    <property type="project" value="InterPro"/>
</dbReference>
<dbReference type="GO" id="GO:0015079">
    <property type="term" value="F:potassium ion transmembrane transporter activity"/>
    <property type="evidence" value="ECO:0007669"/>
    <property type="project" value="InterPro"/>
</dbReference>
<dbReference type="Gene3D" id="3.40.50.720">
    <property type="entry name" value="NAD(P)-binding Rossmann-like Domain"/>
    <property type="match status" value="1"/>
</dbReference>
<dbReference type="Gene3D" id="3.30.70.1450">
    <property type="entry name" value="Regulator of K+ conductance, C-terminal domain"/>
    <property type="match status" value="1"/>
</dbReference>
<dbReference type="InterPro" id="IPR006036">
    <property type="entry name" value="K_uptake_TrkA"/>
</dbReference>
<dbReference type="InterPro" id="IPR036291">
    <property type="entry name" value="NAD(P)-bd_dom_sf"/>
</dbReference>
<dbReference type="InterPro" id="IPR006037">
    <property type="entry name" value="RCK_C"/>
</dbReference>
<dbReference type="InterPro" id="IPR036721">
    <property type="entry name" value="RCK_C_sf"/>
</dbReference>
<dbReference type="InterPro" id="IPR003148">
    <property type="entry name" value="RCK_N"/>
</dbReference>
<dbReference type="InterPro" id="IPR050721">
    <property type="entry name" value="Trk_Ktr_HKT_K-transport"/>
</dbReference>
<dbReference type="PANTHER" id="PTHR43833">
    <property type="entry name" value="POTASSIUM CHANNEL PROTEIN 2-RELATED-RELATED"/>
    <property type="match status" value="1"/>
</dbReference>
<dbReference type="PANTHER" id="PTHR43833:SF5">
    <property type="entry name" value="TRK SYSTEM POTASSIUM UPTAKE PROTEIN TRKA"/>
    <property type="match status" value="1"/>
</dbReference>
<dbReference type="Pfam" id="PF02080">
    <property type="entry name" value="TrkA_C"/>
    <property type="match status" value="1"/>
</dbReference>
<dbReference type="Pfam" id="PF02254">
    <property type="entry name" value="TrkA_N"/>
    <property type="match status" value="1"/>
</dbReference>
<dbReference type="PRINTS" id="PR00335">
    <property type="entry name" value="KUPTAKETRKA"/>
</dbReference>
<dbReference type="SUPFAM" id="SSF51735">
    <property type="entry name" value="NAD(P)-binding Rossmann-fold domains"/>
    <property type="match status" value="1"/>
</dbReference>
<dbReference type="SUPFAM" id="SSF116726">
    <property type="entry name" value="TrkA C-terminal domain-like"/>
    <property type="match status" value="1"/>
</dbReference>
<dbReference type="PROSITE" id="PS51202">
    <property type="entry name" value="RCK_C"/>
    <property type="match status" value="1"/>
</dbReference>
<dbReference type="PROSITE" id="PS51201">
    <property type="entry name" value="RCK_N"/>
    <property type="match status" value="1"/>
</dbReference>
<protein>
    <recommendedName>
        <fullName>Trk system potassium uptake protein TrkA homolog</fullName>
        <shortName>K(+)-uptake protein TrkA homolog</shortName>
    </recommendedName>
</protein>
<gene>
    <name type="primary">trkA</name>
    <name type="ordered locus">MJ1105</name>
</gene>
<reference key="1">
    <citation type="journal article" date="1996" name="Science">
        <title>Complete genome sequence of the methanogenic archaeon, Methanococcus jannaschii.</title>
        <authorList>
            <person name="Bult C.J."/>
            <person name="White O."/>
            <person name="Olsen G.J."/>
            <person name="Zhou L."/>
            <person name="Fleischmann R.D."/>
            <person name="Sutton G.G."/>
            <person name="Blake J.A."/>
            <person name="FitzGerald L.M."/>
            <person name="Clayton R.A."/>
            <person name="Gocayne J.D."/>
            <person name="Kerlavage A.R."/>
            <person name="Dougherty B.A."/>
            <person name="Tomb J.-F."/>
            <person name="Adams M.D."/>
            <person name="Reich C.I."/>
            <person name="Overbeek R."/>
            <person name="Kirkness E.F."/>
            <person name="Weinstock K.G."/>
            <person name="Merrick J.M."/>
            <person name="Glodek A."/>
            <person name="Scott J.L."/>
            <person name="Geoghagen N.S.M."/>
            <person name="Weidman J.F."/>
            <person name="Fuhrmann J.L."/>
            <person name="Nguyen D."/>
            <person name="Utterback T.R."/>
            <person name="Kelley J.M."/>
            <person name="Peterson J.D."/>
            <person name="Sadow P.W."/>
            <person name="Hanna M.C."/>
            <person name="Cotton M.D."/>
            <person name="Roberts K.M."/>
            <person name="Hurst M.A."/>
            <person name="Kaine B.P."/>
            <person name="Borodovsky M."/>
            <person name="Klenk H.-P."/>
            <person name="Fraser C.M."/>
            <person name="Smith H.O."/>
            <person name="Woese C.R."/>
            <person name="Venter J.C."/>
        </authorList>
    </citation>
    <scope>NUCLEOTIDE SEQUENCE [LARGE SCALE GENOMIC DNA]</scope>
    <source>
        <strain>ATCC 43067 / DSM 2661 / JAL-1 / JCM 10045 / NBRC 100440</strain>
    </source>
</reference>
<reference key="2">
    <citation type="journal article" date="2002" name="Cell">
        <title>A mechanism of regulating transmembrane potassium flux through a ligand-mediated conformational switch.</title>
        <authorList>
            <person name="Roosild T.P."/>
            <person name="Miller S."/>
            <person name="Booth I.R."/>
            <person name="Choe S."/>
        </authorList>
    </citation>
    <scope>X-RAY CRYSTALLOGRAPHY (2.30 ANGSTROMS) OF 1-136 IN COMPLEX WITH NAD</scope>
    <scope>DOMAIN</scope>
    <scope>SUBUNIT</scope>
</reference>
<comment type="function">
    <text evidence="1">Part of a potassium transport system.</text>
</comment>
<comment type="subunit">
    <text evidence="4">Homotetramer. Dimer of dimers.</text>
</comment>
<comment type="domain">
    <text evidence="4">The RCK N-terminal domain binds NAD and possibly other effectors. This is expected to cause a conformation change that regulates potassium transport.</text>
</comment>
<accession>Q58505</accession>
<proteinExistence type="evidence at protein level"/>
<feature type="chain" id="PRO_0000148725" description="Trk system potassium uptake protein TrkA homolog">
    <location>
        <begin position="1"/>
        <end position="218"/>
    </location>
</feature>
<feature type="domain" description="RCK N-terminal" evidence="2">
    <location>
        <begin position="1"/>
        <end position="116"/>
    </location>
</feature>
<feature type="domain" description="RCK C-terminal" evidence="3">
    <location>
        <begin position="136"/>
        <end position="217"/>
    </location>
</feature>
<feature type="binding site" description="in other chain" evidence="4">
    <location>
        <begin position="7"/>
        <end position="11"/>
    </location>
    <ligand>
        <name>NAD(+)</name>
        <dbReference type="ChEBI" id="CHEBI:57540"/>
        <note>ligand shared between dimeric partners</note>
    </ligand>
</feature>
<feature type="binding site" description="in other chain" evidence="4">
    <location>
        <position position="30"/>
    </location>
    <ligand>
        <name>NAD(+)</name>
        <dbReference type="ChEBI" id="CHEBI:57540"/>
        <note>ligand shared between dimeric partners</note>
    </ligand>
</feature>
<feature type="binding site" description="in other chain" evidence="4">
    <location>
        <position position="51"/>
    </location>
    <ligand>
        <name>NAD(+)</name>
        <dbReference type="ChEBI" id="CHEBI:57540"/>
        <note>ligand shared between dimeric partners</note>
    </ligand>
</feature>
<feature type="binding site" description="in other chain" evidence="4">
    <location>
        <begin position="73"/>
        <end position="74"/>
    </location>
    <ligand>
        <name>NAD(+)</name>
        <dbReference type="ChEBI" id="CHEBI:57540"/>
        <note>ligand shared between dimeric partners</note>
    </ligand>
</feature>
<feature type="binding site" evidence="4">
    <location>
        <position position="97"/>
    </location>
    <ligand>
        <name>NAD(+)</name>
        <dbReference type="ChEBI" id="CHEBI:57540"/>
        <note>ligand shared between dimeric partners</note>
    </ligand>
</feature>
<feature type="strand" evidence="5">
    <location>
        <begin position="2"/>
        <end position="6"/>
    </location>
</feature>
<feature type="helix" evidence="5">
    <location>
        <begin position="10"/>
        <end position="21"/>
    </location>
</feature>
<feature type="strand" evidence="5">
    <location>
        <begin position="25"/>
        <end position="31"/>
    </location>
</feature>
<feature type="helix" evidence="5">
    <location>
        <begin position="33"/>
        <end position="42"/>
    </location>
</feature>
<feature type="strand" evidence="5">
    <location>
        <begin position="44"/>
        <end position="50"/>
    </location>
</feature>
<feature type="helix" evidence="5">
    <location>
        <begin position="55"/>
        <end position="60"/>
    </location>
</feature>
<feature type="turn" evidence="5">
    <location>
        <begin position="61"/>
        <end position="65"/>
    </location>
</feature>
<feature type="strand" evidence="5">
    <location>
        <begin position="67"/>
        <end position="71"/>
    </location>
</feature>
<feature type="helix" evidence="5">
    <location>
        <begin position="76"/>
        <end position="88"/>
    </location>
</feature>
<feature type="strand" evidence="5">
    <location>
        <begin position="94"/>
        <end position="97"/>
    </location>
</feature>
<feature type="helix" evidence="5">
    <location>
        <begin position="103"/>
        <end position="109"/>
    </location>
</feature>
<feature type="strand" evidence="5">
    <location>
        <begin position="113"/>
        <end position="116"/>
    </location>
</feature>
<feature type="helix" evidence="5">
    <location>
        <begin position="118"/>
        <end position="130"/>
    </location>
</feature>
<organism>
    <name type="scientific">Methanocaldococcus jannaschii (strain ATCC 43067 / DSM 2661 / JAL-1 / JCM 10045 / NBRC 100440)</name>
    <name type="common">Methanococcus jannaschii</name>
    <dbReference type="NCBI Taxonomy" id="243232"/>
    <lineage>
        <taxon>Archaea</taxon>
        <taxon>Methanobacteriati</taxon>
        <taxon>Methanobacteriota</taxon>
        <taxon>Methanomada group</taxon>
        <taxon>Methanococci</taxon>
        <taxon>Methanococcales</taxon>
        <taxon>Methanocaldococcaceae</taxon>
        <taxon>Methanocaldococcus</taxon>
    </lineage>
</organism>
<evidence type="ECO:0000250" key="1"/>
<evidence type="ECO:0000255" key="2">
    <source>
        <dbReference type="PROSITE-ProRule" id="PRU00543"/>
    </source>
</evidence>
<evidence type="ECO:0000255" key="3">
    <source>
        <dbReference type="PROSITE-ProRule" id="PRU00544"/>
    </source>
</evidence>
<evidence type="ECO:0000269" key="4">
    <source>
    </source>
</evidence>
<evidence type="ECO:0007829" key="5">
    <source>
        <dbReference type="PDB" id="1LSS"/>
    </source>
</evidence>
<name>TRKA_METJA</name>